<comment type="catalytic activity">
    <reaction evidence="1">
        <text>D-erythro-1-(imidazol-4-yl)glycerol 3-phosphate = 3-(imidazol-4-yl)-2-oxopropyl phosphate + H2O</text>
        <dbReference type="Rhea" id="RHEA:11040"/>
        <dbReference type="ChEBI" id="CHEBI:15377"/>
        <dbReference type="ChEBI" id="CHEBI:57766"/>
        <dbReference type="ChEBI" id="CHEBI:58278"/>
        <dbReference type="EC" id="4.2.1.19"/>
    </reaction>
</comment>
<comment type="pathway">
    <text evidence="1">Amino-acid biosynthesis; L-histidine biosynthesis; L-histidine from 5-phospho-alpha-D-ribose 1-diphosphate: step 6/9.</text>
</comment>
<comment type="subcellular location">
    <subcellularLocation>
        <location evidence="1">Cytoplasm</location>
    </subcellularLocation>
</comment>
<comment type="similarity">
    <text evidence="1">Belongs to the imidazoleglycerol-phosphate dehydratase family.</text>
</comment>
<sequence>MRQADITRKTAETAISVKVDLDGTGRYDIRTGVGFFDHMMDQLARHSLIDITLRCEGDLHIDDHHTVEDCGIALGQALTQALGDKRGIRRYGSFHLAMDDALVRCALDLSGRPYLVCNLPFPAAKIGSFDTELVREFFQALSTHGGITLHLDLIHGLNGHHIAEAAFKAVARSLREAVEPDPRAASAIPSTKGML</sequence>
<organism>
    <name type="scientific">Cereibacter sphaeroides (strain ATCC 17025 / ATH 2.4.3)</name>
    <name type="common">Rhodobacter sphaeroides</name>
    <dbReference type="NCBI Taxonomy" id="349102"/>
    <lineage>
        <taxon>Bacteria</taxon>
        <taxon>Pseudomonadati</taxon>
        <taxon>Pseudomonadota</taxon>
        <taxon>Alphaproteobacteria</taxon>
        <taxon>Rhodobacterales</taxon>
        <taxon>Paracoccaceae</taxon>
        <taxon>Cereibacter</taxon>
    </lineage>
</organism>
<gene>
    <name evidence="1" type="primary">hisB</name>
    <name type="ordered locus">Rsph17025_2249</name>
</gene>
<dbReference type="EC" id="4.2.1.19" evidence="1"/>
<dbReference type="EMBL" id="CP000661">
    <property type="protein sequence ID" value="ABP71139.1"/>
    <property type="molecule type" value="Genomic_DNA"/>
</dbReference>
<dbReference type="SMR" id="A4WUS5"/>
<dbReference type="STRING" id="349102.Rsph17025_2249"/>
<dbReference type="KEGG" id="rsq:Rsph17025_2249"/>
<dbReference type="eggNOG" id="COG0131">
    <property type="taxonomic scope" value="Bacteria"/>
</dbReference>
<dbReference type="HOGENOM" id="CLU_044308_2_0_5"/>
<dbReference type="BioCyc" id="RSPH349102:G1G8M-2319-MONOMER"/>
<dbReference type="UniPathway" id="UPA00031">
    <property type="reaction ID" value="UER00011"/>
</dbReference>
<dbReference type="GO" id="GO:0005737">
    <property type="term" value="C:cytoplasm"/>
    <property type="evidence" value="ECO:0007669"/>
    <property type="project" value="UniProtKB-SubCell"/>
</dbReference>
<dbReference type="GO" id="GO:0004424">
    <property type="term" value="F:imidazoleglycerol-phosphate dehydratase activity"/>
    <property type="evidence" value="ECO:0007669"/>
    <property type="project" value="UniProtKB-UniRule"/>
</dbReference>
<dbReference type="GO" id="GO:0000105">
    <property type="term" value="P:L-histidine biosynthetic process"/>
    <property type="evidence" value="ECO:0007669"/>
    <property type="project" value="UniProtKB-UniRule"/>
</dbReference>
<dbReference type="CDD" id="cd07914">
    <property type="entry name" value="IGPD"/>
    <property type="match status" value="1"/>
</dbReference>
<dbReference type="FunFam" id="3.30.230.40:FF:000001">
    <property type="entry name" value="Imidazoleglycerol-phosphate dehydratase HisB"/>
    <property type="match status" value="1"/>
</dbReference>
<dbReference type="FunFam" id="3.30.230.40:FF:000003">
    <property type="entry name" value="Imidazoleglycerol-phosphate dehydratase HisB"/>
    <property type="match status" value="1"/>
</dbReference>
<dbReference type="Gene3D" id="3.30.230.40">
    <property type="entry name" value="Imidazole glycerol phosphate dehydratase, domain 1"/>
    <property type="match status" value="2"/>
</dbReference>
<dbReference type="HAMAP" id="MF_00076">
    <property type="entry name" value="HisB"/>
    <property type="match status" value="1"/>
</dbReference>
<dbReference type="InterPro" id="IPR038494">
    <property type="entry name" value="IGPD_sf"/>
</dbReference>
<dbReference type="InterPro" id="IPR000807">
    <property type="entry name" value="ImidazoleglycerolP_deHydtase"/>
</dbReference>
<dbReference type="InterPro" id="IPR020565">
    <property type="entry name" value="ImidazoleglycerP_deHydtase_CS"/>
</dbReference>
<dbReference type="InterPro" id="IPR020568">
    <property type="entry name" value="Ribosomal_Su5_D2-typ_SF"/>
</dbReference>
<dbReference type="NCBIfam" id="NF002109">
    <property type="entry name" value="PRK00951.1-5"/>
    <property type="match status" value="1"/>
</dbReference>
<dbReference type="NCBIfam" id="NF002111">
    <property type="entry name" value="PRK00951.2-1"/>
    <property type="match status" value="1"/>
</dbReference>
<dbReference type="NCBIfam" id="NF002114">
    <property type="entry name" value="PRK00951.2-4"/>
    <property type="match status" value="1"/>
</dbReference>
<dbReference type="PANTHER" id="PTHR23133:SF2">
    <property type="entry name" value="IMIDAZOLEGLYCEROL-PHOSPHATE DEHYDRATASE"/>
    <property type="match status" value="1"/>
</dbReference>
<dbReference type="PANTHER" id="PTHR23133">
    <property type="entry name" value="IMIDAZOLEGLYCEROL-PHOSPHATE DEHYDRATASE HIS7"/>
    <property type="match status" value="1"/>
</dbReference>
<dbReference type="Pfam" id="PF00475">
    <property type="entry name" value="IGPD"/>
    <property type="match status" value="1"/>
</dbReference>
<dbReference type="SUPFAM" id="SSF54211">
    <property type="entry name" value="Ribosomal protein S5 domain 2-like"/>
    <property type="match status" value="2"/>
</dbReference>
<dbReference type="PROSITE" id="PS00954">
    <property type="entry name" value="IGP_DEHYDRATASE_1"/>
    <property type="match status" value="1"/>
</dbReference>
<dbReference type="PROSITE" id="PS00955">
    <property type="entry name" value="IGP_DEHYDRATASE_2"/>
    <property type="match status" value="1"/>
</dbReference>
<keyword id="KW-0028">Amino-acid biosynthesis</keyword>
<keyword id="KW-0963">Cytoplasm</keyword>
<keyword id="KW-0368">Histidine biosynthesis</keyword>
<keyword id="KW-0456">Lyase</keyword>
<name>HIS7_CERS5</name>
<evidence type="ECO:0000255" key="1">
    <source>
        <dbReference type="HAMAP-Rule" id="MF_00076"/>
    </source>
</evidence>
<reference key="1">
    <citation type="submission" date="2007-04" db="EMBL/GenBank/DDBJ databases">
        <title>Complete sequence of chromosome of Rhodobacter sphaeroides ATCC 17025.</title>
        <authorList>
            <consortium name="US DOE Joint Genome Institute"/>
            <person name="Copeland A."/>
            <person name="Lucas S."/>
            <person name="Lapidus A."/>
            <person name="Barry K."/>
            <person name="Detter J.C."/>
            <person name="Glavina del Rio T."/>
            <person name="Hammon N."/>
            <person name="Israni S."/>
            <person name="Dalin E."/>
            <person name="Tice H."/>
            <person name="Pitluck S."/>
            <person name="Chertkov O."/>
            <person name="Brettin T."/>
            <person name="Bruce D."/>
            <person name="Han C."/>
            <person name="Schmutz J."/>
            <person name="Larimer F."/>
            <person name="Land M."/>
            <person name="Hauser L."/>
            <person name="Kyrpides N."/>
            <person name="Kim E."/>
            <person name="Richardson P."/>
            <person name="Mackenzie C."/>
            <person name="Choudhary M."/>
            <person name="Donohue T.J."/>
            <person name="Kaplan S."/>
        </authorList>
    </citation>
    <scope>NUCLEOTIDE SEQUENCE [LARGE SCALE GENOMIC DNA]</scope>
    <source>
        <strain>ATCC 17025 / ATH 2.4.3</strain>
    </source>
</reference>
<accession>A4WUS5</accession>
<feature type="chain" id="PRO_1000010347" description="Imidazoleglycerol-phosphate dehydratase">
    <location>
        <begin position="1"/>
        <end position="195"/>
    </location>
</feature>
<proteinExistence type="inferred from homology"/>
<protein>
    <recommendedName>
        <fullName evidence="1">Imidazoleglycerol-phosphate dehydratase</fullName>
        <shortName evidence="1">IGPD</shortName>
        <ecNumber evidence="1">4.2.1.19</ecNumber>
    </recommendedName>
</protein>